<gene>
    <name type="primary">OVGP1</name>
    <name type="synonym">OGP</name>
</gene>
<name>OVGP1_PAPAN</name>
<organism>
    <name type="scientific">Papio anubis</name>
    <name type="common">Olive baboon</name>
    <dbReference type="NCBI Taxonomy" id="9555"/>
    <lineage>
        <taxon>Eukaryota</taxon>
        <taxon>Metazoa</taxon>
        <taxon>Chordata</taxon>
        <taxon>Craniata</taxon>
        <taxon>Vertebrata</taxon>
        <taxon>Euteleostomi</taxon>
        <taxon>Mammalia</taxon>
        <taxon>Eutheria</taxon>
        <taxon>Euarchontoglires</taxon>
        <taxon>Primates</taxon>
        <taxon>Haplorrhini</taxon>
        <taxon>Catarrhini</taxon>
        <taxon>Cercopithecidae</taxon>
        <taxon>Cercopithecinae</taxon>
        <taxon>Papio</taxon>
    </lineage>
</organism>
<accession>P36718</accession>
<proteinExistence type="evidence at transcript level"/>
<evidence type="ECO:0000250" key="1"/>
<evidence type="ECO:0000255" key="2"/>
<evidence type="ECO:0000255" key="3">
    <source>
        <dbReference type="PROSITE-ProRule" id="PRU01258"/>
    </source>
</evidence>
<evidence type="ECO:0000256" key="4">
    <source>
        <dbReference type="SAM" id="MobiDB-lite"/>
    </source>
</evidence>
<evidence type="ECO:0000305" key="5"/>
<protein>
    <recommendedName>
        <fullName>Oviduct-specific glycoprotein</fullName>
    </recommendedName>
    <alternativeName>
        <fullName>Estrogen-dependent oviduct protein</fullName>
    </alternativeName>
    <alternativeName>
        <fullName>Oviductal glycoprotein</fullName>
    </alternativeName>
    <alternativeName>
        <fullName>Oviductin</fullName>
    </alternativeName>
</protein>
<comment type="function">
    <text>Binds to oocyte zona pellucida in vivo. May play a role in the fertilization process and/or early embryonic development.</text>
</comment>
<comment type="subcellular location">
    <subcellularLocation>
        <location>Cytoplasmic vesicle</location>
        <location>Secretory vesicle</location>
    </subcellularLocation>
    <text>Secretory granules.</text>
</comment>
<comment type="tissue specificity">
    <text>Oviduct.</text>
</comment>
<comment type="developmental stage">
    <text>At the time of ovulation.</text>
</comment>
<comment type="similarity">
    <text evidence="5">Belongs to the glycosyl hydrolase 18 family.</text>
</comment>
<reference key="1">
    <citation type="journal article" date="1997" name="Hum. Reprod. Update">
        <title>The baboon oviduct: characteristics of an oestradiol-dependent oviduct-specific glycoprotein.</title>
        <authorList>
            <person name="Verhage H.G."/>
            <person name="Fazleabas A.T."/>
            <person name="Mavrogianis P.A."/>
            <person name="O'Day-Bowman M.B."/>
            <person name="Donnelly K.M."/>
            <person name="Arias E.B."/>
            <person name="Jaffe R.C."/>
        </authorList>
    </citation>
    <scope>NUCLEOTIDE SEQUENCE [MRNA]</scope>
    <source>
        <tissue>Oviduct</tissue>
    </source>
</reference>
<reference key="2">
    <citation type="journal article" date="1991" name="Mol. Endocrinol.">
        <title>Cloning of a recombinant complementary DNA to a baboon (Papio anubis) estradiol-dependent oviduct-specific glycoprotein.</title>
        <authorList>
            <person name="Donnelly K.M."/>
            <person name="Fazleabas A.T."/>
            <person name="Verhage H.G."/>
            <person name="Mavrogianis P.A."/>
            <person name="Jaffe R.C."/>
        </authorList>
    </citation>
    <scope>PRELIMINARY PARTIAL NUCLEOTIDE SEQUENCE</scope>
    <source>
        <tissue>Oviduct</tissue>
    </source>
</reference>
<feature type="signal peptide" evidence="1">
    <location>
        <begin position="1"/>
        <end position="21"/>
    </location>
</feature>
<feature type="chain" id="PRO_0000011976" description="Oviduct-specific glycoprotein">
    <location>
        <begin position="22"/>
        <end position="623"/>
    </location>
</feature>
<feature type="domain" description="GH18" evidence="3">
    <location>
        <begin position="22"/>
        <end position="385"/>
    </location>
</feature>
<feature type="region of interest" description="Disordered" evidence="4">
    <location>
        <begin position="539"/>
        <end position="558"/>
    </location>
</feature>
<feature type="region of interest" description="Disordered" evidence="4">
    <location>
        <begin position="594"/>
        <end position="623"/>
    </location>
</feature>
<feature type="compositionally biased region" description="Polar residues" evidence="4">
    <location>
        <begin position="613"/>
        <end position="623"/>
    </location>
</feature>
<feature type="binding site" evidence="3">
    <location>
        <begin position="71"/>
        <end position="72"/>
    </location>
    <ligand>
        <name>chitin</name>
        <dbReference type="ChEBI" id="CHEBI:17029"/>
    </ligand>
</feature>
<feature type="binding site" evidence="3">
    <location>
        <begin position="98"/>
        <end position="101"/>
    </location>
    <ligand>
        <name>chitin</name>
        <dbReference type="ChEBI" id="CHEBI:17029"/>
    </ligand>
</feature>
<feature type="binding site" evidence="3">
    <location>
        <position position="142"/>
    </location>
    <ligand>
        <name>chitin</name>
        <dbReference type="ChEBI" id="CHEBI:17029"/>
    </ligand>
</feature>
<feature type="binding site" evidence="3">
    <location>
        <begin position="211"/>
        <end position="214"/>
    </location>
    <ligand>
        <name>chitin</name>
        <dbReference type="ChEBI" id="CHEBI:17029"/>
    </ligand>
</feature>
<feature type="binding site" evidence="3">
    <location>
        <position position="355"/>
    </location>
    <ligand>
        <name>chitin</name>
        <dbReference type="ChEBI" id="CHEBI:17029"/>
    </ligand>
</feature>
<feature type="glycosylation site" description="N-linked (GlcNAc...) asparagine" evidence="2">
    <location>
        <position position="402"/>
    </location>
</feature>
<feature type="glycosylation site" description="N-linked (GlcNAc...) asparagine" evidence="2">
    <location>
        <position position="441"/>
    </location>
</feature>
<feature type="disulfide bond" evidence="3">
    <location>
        <begin position="26"/>
        <end position="51"/>
    </location>
</feature>
<sequence length="623" mass="69292">MWKLLLWVGLVLVLKHHDGAAHKLVCYFTNWAHSRPGPASILPHDLDPFLCTHLIFAFASMNNNQIVAKDLQDEKILYPEFNKLKERNRELKTLLSIGGWNFGTSRFTTMLSTFANREKFIASVISLLRTHDFDGLDLFFLYPGLRGSPMHDRWTFLFLIEELLFAFRKEALLTMRPRLLLSAAVSGVPHIVQTSYDVRFLGRLLDFINVLSYDLHGSWEKFTGHNSPLFSLPEDPKSSAYAMNYWRKLGAPSEKLIMGIPTYGRTFRLLKASKNGLQATAIGPASPGKYTKQAGFLAYFEICSFVWGAKKHWIDYQYVPYANKGKEWVGYDDAISFSYKAWFIRREHFGGAMVWTLDMDDVRGTFCGTGPFPLVYVMNDILVRAEFSSTSLPQFWLSSAVNSSSTDPERLAVTKAWTTDIKILPPGGEAGVTEIHGKCENMTITPRVTIVTPTKETVSLGKHTVALGEKTEITGATTMTSVGHQSMTPGEKALTPVGHQSELPGKKTLTPVGHQSVTTGQKTLISVGYHSVTPGEKTLTPVGHPSVTPVSHQSVSPGGMTMTPVHFQTETLRQNTMAPRRKAVAHEKVTVPSRKISVTPEGQTVPLRGEYLTSETGTHPQDG</sequence>
<keyword id="KW-0968">Cytoplasmic vesicle</keyword>
<keyword id="KW-1015">Disulfide bond</keyword>
<keyword id="KW-0278">Fertilization</keyword>
<keyword id="KW-0325">Glycoprotein</keyword>
<keyword id="KW-1185">Reference proteome</keyword>
<keyword id="KW-0732">Signal</keyword>
<dbReference type="EMBL" id="M59903">
    <property type="protein sequence ID" value="AAB39765.1"/>
    <property type="molecule type" value="mRNA"/>
</dbReference>
<dbReference type="PIR" id="A37954">
    <property type="entry name" value="A37954"/>
</dbReference>
<dbReference type="RefSeq" id="NP_001106087.1">
    <property type="nucleotide sequence ID" value="NM_001112617.1"/>
</dbReference>
<dbReference type="SMR" id="P36718"/>
<dbReference type="STRING" id="9555.ENSPANP00000004617"/>
<dbReference type="CAZy" id="GH18">
    <property type="family name" value="Glycoside Hydrolase Family 18"/>
</dbReference>
<dbReference type="GlyCosmos" id="P36718">
    <property type="glycosylation" value="2 sites, No reported glycans"/>
</dbReference>
<dbReference type="GeneID" id="100126696"/>
<dbReference type="KEGG" id="panu:100126696"/>
<dbReference type="CTD" id="5016"/>
<dbReference type="eggNOG" id="KOG2806">
    <property type="taxonomic scope" value="Eukaryota"/>
</dbReference>
<dbReference type="OrthoDB" id="12074at314294"/>
<dbReference type="Proteomes" id="UP000028761">
    <property type="component" value="Unplaced"/>
</dbReference>
<dbReference type="GO" id="GO:0005576">
    <property type="term" value="C:extracellular region"/>
    <property type="evidence" value="ECO:0007669"/>
    <property type="project" value="TreeGrafter"/>
</dbReference>
<dbReference type="GO" id="GO:0030133">
    <property type="term" value="C:transport vesicle"/>
    <property type="evidence" value="ECO:0007669"/>
    <property type="project" value="UniProtKB-SubCell"/>
</dbReference>
<dbReference type="GO" id="GO:0008061">
    <property type="term" value="F:chitin binding"/>
    <property type="evidence" value="ECO:0007669"/>
    <property type="project" value="InterPro"/>
</dbReference>
<dbReference type="GO" id="GO:0004568">
    <property type="term" value="F:chitinase activity"/>
    <property type="evidence" value="ECO:0007669"/>
    <property type="project" value="TreeGrafter"/>
</dbReference>
<dbReference type="GO" id="GO:0005975">
    <property type="term" value="P:carbohydrate metabolic process"/>
    <property type="evidence" value="ECO:0007669"/>
    <property type="project" value="InterPro"/>
</dbReference>
<dbReference type="GO" id="GO:0006032">
    <property type="term" value="P:chitin catabolic process"/>
    <property type="evidence" value="ECO:0007669"/>
    <property type="project" value="TreeGrafter"/>
</dbReference>
<dbReference type="GO" id="GO:0007338">
    <property type="term" value="P:single fertilization"/>
    <property type="evidence" value="ECO:0007669"/>
    <property type="project" value="UniProtKB-KW"/>
</dbReference>
<dbReference type="CDD" id="cd02872">
    <property type="entry name" value="GH18_chitolectin_chitotriosidase"/>
    <property type="match status" value="1"/>
</dbReference>
<dbReference type="FunFam" id="3.20.20.80:FF:000007">
    <property type="entry name" value="Acidic mammalian chitinase"/>
    <property type="match status" value="1"/>
</dbReference>
<dbReference type="FunFam" id="3.10.50.10:FF:000001">
    <property type="entry name" value="Chitinase 3-like 1"/>
    <property type="match status" value="1"/>
</dbReference>
<dbReference type="Gene3D" id="3.10.50.10">
    <property type="match status" value="1"/>
</dbReference>
<dbReference type="Gene3D" id="3.20.20.80">
    <property type="entry name" value="Glycosidases"/>
    <property type="match status" value="1"/>
</dbReference>
<dbReference type="InterPro" id="IPR011583">
    <property type="entry name" value="Chitinase_II/V-like_cat"/>
</dbReference>
<dbReference type="InterPro" id="IPR029070">
    <property type="entry name" value="Chitinase_insertion_sf"/>
</dbReference>
<dbReference type="InterPro" id="IPR001223">
    <property type="entry name" value="Glyco_hydro18_cat"/>
</dbReference>
<dbReference type="InterPro" id="IPR017853">
    <property type="entry name" value="Glycoside_hydrolase_SF"/>
</dbReference>
<dbReference type="InterPro" id="IPR050314">
    <property type="entry name" value="Glycosyl_Hydrlase_18"/>
</dbReference>
<dbReference type="PANTHER" id="PTHR11177">
    <property type="entry name" value="CHITINASE"/>
    <property type="match status" value="1"/>
</dbReference>
<dbReference type="PANTHER" id="PTHR11177:SF385">
    <property type="entry name" value="OVIDUCT-SPECIFIC GLYCOPROTEIN"/>
    <property type="match status" value="1"/>
</dbReference>
<dbReference type="Pfam" id="PF00704">
    <property type="entry name" value="Glyco_hydro_18"/>
    <property type="match status" value="1"/>
</dbReference>
<dbReference type="SMART" id="SM00636">
    <property type="entry name" value="Glyco_18"/>
    <property type="match status" value="1"/>
</dbReference>
<dbReference type="SUPFAM" id="SSF51445">
    <property type="entry name" value="(Trans)glycosidases"/>
    <property type="match status" value="1"/>
</dbReference>
<dbReference type="SUPFAM" id="SSF54556">
    <property type="entry name" value="Chitinase insertion domain"/>
    <property type="match status" value="1"/>
</dbReference>
<dbReference type="PROSITE" id="PS51910">
    <property type="entry name" value="GH18_2"/>
    <property type="match status" value="1"/>
</dbReference>